<dbReference type="EC" id="7.1.2.2" evidence="1"/>
<dbReference type="EMBL" id="BA000034">
    <property type="protein sequence ID" value="BAC63217.1"/>
    <property type="status" value="ALT_INIT"/>
    <property type="molecule type" value="Genomic_DNA"/>
</dbReference>
<dbReference type="RefSeq" id="WP_011054135.1">
    <property type="nucleotide sequence ID" value="NC_004606.1"/>
</dbReference>
<dbReference type="SMR" id="P0DA07"/>
<dbReference type="KEGG" id="sps:SPs0122"/>
<dbReference type="HOGENOM" id="CLU_008162_3_1_9"/>
<dbReference type="GO" id="GO:0045259">
    <property type="term" value="C:proton-transporting ATP synthase complex"/>
    <property type="evidence" value="ECO:0007669"/>
    <property type="project" value="UniProtKB-ARBA"/>
</dbReference>
<dbReference type="GO" id="GO:0005524">
    <property type="term" value="F:ATP binding"/>
    <property type="evidence" value="ECO:0007669"/>
    <property type="project" value="UniProtKB-UniRule"/>
</dbReference>
<dbReference type="GO" id="GO:0046933">
    <property type="term" value="F:proton-transporting ATP synthase activity, rotational mechanism"/>
    <property type="evidence" value="ECO:0007669"/>
    <property type="project" value="UniProtKB-UniRule"/>
</dbReference>
<dbReference type="GO" id="GO:0046961">
    <property type="term" value="F:proton-transporting ATPase activity, rotational mechanism"/>
    <property type="evidence" value="ECO:0007669"/>
    <property type="project" value="InterPro"/>
</dbReference>
<dbReference type="GO" id="GO:0042777">
    <property type="term" value="P:proton motive force-driven plasma membrane ATP synthesis"/>
    <property type="evidence" value="ECO:0007669"/>
    <property type="project" value="UniProtKB-UniRule"/>
</dbReference>
<dbReference type="CDD" id="cd18111">
    <property type="entry name" value="ATP-synt_V_A-type_alpha_C"/>
    <property type="match status" value="1"/>
</dbReference>
<dbReference type="CDD" id="cd18119">
    <property type="entry name" value="ATP-synt_V_A-type_alpha_N"/>
    <property type="match status" value="1"/>
</dbReference>
<dbReference type="CDD" id="cd01134">
    <property type="entry name" value="V_A-ATPase_A"/>
    <property type="match status" value="1"/>
</dbReference>
<dbReference type="FunFam" id="3.40.50.300:FF:000675">
    <property type="entry name" value="V-type ATP synthase alpha chain"/>
    <property type="match status" value="1"/>
</dbReference>
<dbReference type="FunFam" id="2.40.30.20:FF:000002">
    <property type="entry name" value="V-type proton ATPase catalytic subunit A"/>
    <property type="match status" value="1"/>
</dbReference>
<dbReference type="FunFam" id="2.40.50.100:FF:000008">
    <property type="entry name" value="V-type proton ATPase catalytic subunit A"/>
    <property type="match status" value="1"/>
</dbReference>
<dbReference type="Gene3D" id="2.40.30.20">
    <property type="match status" value="1"/>
</dbReference>
<dbReference type="Gene3D" id="2.40.50.100">
    <property type="match status" value="1"/>
</dbReference>
<dbReference type="Gene3D" id="1.10.1140.10">
    <property type="entry name" value="Bovine Mitochondrial F1-atpase, Atp Synthase Beta Chain, Chain D, domain 3"/>
    <property type="match status" value="1"/>
</dbReference>
<dbReference type="Gene3D" id="3.40.50.300">
    <property type="entry name" value="P-loop containing nucleotide triphosphate hydrolases"/>
    <property type="match status" value="1"/>
</dbReference>
<dbReference type="HAMAP" id="MF_00309">
    <property type="entry name" value="ATP_synth_A_arch"/>
    <property type="match status" value="1"/>
</dbReference>
<dbReference type="InterPro" id="IPR055190">
    <property type="entry name" value="ATP-synt_VA_C"/>
</dbReference>
<dbReference type="InterPro" id="IPR031686">
    <property type="entry name" value="ATP-synth_a_Xtn"/>
</dbReference>
<dbReference type="InterPro" id="IPR023366">
    <property type="entry name" value="ATP_synth_asu-like_sf"/>
</dbReference>
<dbReference type="InterPro" id="IPR020003">
    <property type="entry name" value="ATPase_a/bsu_AS"/>
</dbReference>
<dbReference type="InterPro" id="IPR004100">
    <property type="entry name" value="ATPase_F1/V1/A1_a/bsu_N"/>
</dbReference>
<dbReference type="InterPro" id="IPR036121">
    <property type="entry name" value="ATPase_F1/V1/A1_a/bsu_N_sf"/>
</dbReference>
<dbReference type="InterPro" id="IPR000194">
    <property type="entry name" value="ATPase_F1/V1/A1_a/bsu_nucl-bd"/>
</dbReference>
<dbReference type="InterPro" id="IPR024034">
    <property type="entry name" value="ATPase_F1/V1_b/a_C"/>
</dbReference>
<dbReference type="InterPro" id="IPR027417">
    <property type="entry name" value="P-loop_NTPase"/>
</dbReference>
<dbReference type="InterPro" id="IPR022878">
    <property type="entry name" value="V-ATPase_asu"/>
</dbReference>
<dbReference type="NCBIfam" id="NF003220">
    <property type="entry name" value="PRK04192.1"/>
    <property type="match status" value="1"/>
</dbReference>
<dbReference type="PANTHER" id="PTHR43607:SF1">
    <property type="entry name" value="H(+)-TRANSPORTING TWO-SECTOR ATPASE"/>
    <property type="match status" value="1"/>
</dbReference>
<dbReference type="PANTHER" id="PTHR43607">
    <property type="entry name" value="V-TYPE PROTON ATPASE CATALYTIC SUBUNIT A"/>
    <property type="match status" value="1"/>
</dbReference>
<dbReference type="Pfam" id="PF00006">
    <property type="entry name" value="ATP-synt_ab"/>
    <property type="match status" value="1"/>
</dbReference>
<dbReference type="Pfam" id="PF02874">
    <property type="entry name" value="ATP-synt_ab_N"/>
    <property type="match status" value="1"/>
</dbReference>
<dbReference type="Pfam" id="PF16886">
    <property type="entry name" value="ATP-synt_ab_Xtn"/>
    <property type="match status" value="1"/>
</dbReference>
<dbReference type="Pfam" id="PF22919">
    <property type="entry name" value="ATP-synt_VA_C"/>
    <property type="match status" value="1"/>
</dbReference>
<dbReference type="SUPFAM" id="SSF47917">
    <property type="entry name" value="C-terminal domain of alpha and beta subunits of F1 ATP synthase"/>
    <property type="match status" value="1"/>
</dbReference>
<dbReference type="SUPFAM" id="SSF50615">
    <property type="entry name" value="N-terminal domain of alpha and beta subunits of F1 ATP synthase"/>
    <property type="match status" value="1"/>
</dbReference>
<dbReference type="SUPFAM" id="SSF52540">
    <property type="entry name" value="P-loop containing nucleoside triphosphate hydrolases"/>
    <property type="match status" value="1"/>
</dbReference>
<dbReference type="PROSITE" id="PS00152">
    <property type="entry name" value="ATPASE_ALPHA_BETA"/>
    <property type="match status" value="1"/>
</dbReference>
<gene>
    <name evidence="1" type="primary">atpA</name>
    <name type="synonym">ntpA</name>
    <name type="ordered locus">SPs0122</name>
</gene>
<feature type="chain" id="PRO_0000411285" description="V-type ATP synthase alpha chain">
    <location>
        <begin position="1"/>
        <end position="591"/>
    </location>
</feature>
<feature type="binding site" evidence="1">
    <location>
        <begin position="233"/>
        <end position="240"/>
    </location>
    <ligand>
        <name>ATP</name>
        <dbReference type="ChEBI" id="CHEBI:30616"/>
    </ligand>
</feature>
<keyword id="KW-0066">ATP synthesis</keyword>
<keyword id="KW-0067">ATP-binding</keyword>
<keyword id="KW-0375">Hydrogen ion transport</keyword>
<keyword id="KW-0406">Ion transport</keyword>
<keyword id="KW-0547">Nucleotide-binding</keyword>
<keyword id="KW-1278">Translocase</keyword>
<keyword id="KW-0813">Transport</keyword>
<organism>
    <name type="scientific">Streptococcus pyogenes serotype M3 (strain SSI-1)</name>
    <dbReference type="NCBI Taxonomy" id="193567"/>
    <lineage>
        <taxon>Bacteria</taxon>
        <taxon>Bacillati</taxon>
        <taxon>Bacillota</taxon>
        <taxon>Bacilli</taxon>
        <taxon>Lactobacillales</taxon>
        <taxon>Streptococcaceae</taxon>
        <taxon>Streptococcus</taxon>
    </lineage>
</organism>
<comment type="function">
    <text evidence="1">Produces ATP from ADP in the presence of a proton gradient across the membrane. The V-type alpha chain is a catalytic subunit.</text>
</comment>
<comment type="catalytic activity">
    <reaction evidence="1">
        <text>ATP + H2O + 4 H(+)(in) = ADP + phosphate + 5 H(+)(out)</text>
        <dbReference type="Rhea" id="RHEA:57720"/>
        <dbReference type="ChEBI" id="CHEBI:15377"/>
        <dbReference type="ChEBI" id="CHEBI:15378"/>
        <dbReference type="ChEBI" id="CHEBI:30616"/>
        <dbReference type="ChEBI" id="CHEBI:43474"/>
        <dbReference type="ChEBI" id="CHEBI:456216"/>
        <dbReference type="EC" id="7.1.2.2"/>
    </reaction>
</comment>
<comment type="similarity">
    <text evidence="1">Belongs to the ATPase alpha/beta chains family.</text>
</comment>
<comment type="sequence caution" evidence="2">
    <conflict type="erroneous initiation">
        <sequence resource="EMBL-CDS" id="BAC63217"/>
    </conflict>
</comment>
<protein>
    <recommendedName>
        <fullName evidence="1">V-type ATP synthase alpha chain</fullName>
        <ecNumber evidence="1">7.1.2.2</ecNumber>
    </recommendedName>
    <alternativeName>
        <fullName evidence="1">V-ATPase subunit A</fullName>
    </alternativeName>
</protein>
<name>VATA_STRPQ</name>
<sequence length="591" mass="64982">MNQGKIITVSGPLVVASGMQEANIQDICRVGHLGLVGEIIEMRRDQASIQVYEETSGIGPGEPVVTTGCPLSVELGPGLISEMFDGIQRPLDRFQKATDSDFLIRGVAIPSLDRKAKWAFIPKLSVGQEVVAGDILGTVQETAVIEHRIMVPYKVSGTLVAIHAGDFTVTDTVYEIKQEDGSIYQGSLMQTWPVRQSRPVAQKLIPVEPLVTGQRVIDTFFPVTKGGAAAVPGPFGAGKTVVQHQIAKFANVDIVIYVGCGERGNEMTDVLNEFPELIDPNTGQSIMERTVLIANTSNMPVAAREASIYTGITIAEYFRDMGYSVAIMADSTSRWAEALREMSGRLQEMPGDEGYPAYLGSRIAEYYERAGRVRTLGSQEREGTITAIGAVSPPGGDISEPVTQNTLRIIKVFWGLDAPLAQRRHFPAINWLTSYSLYQDDVGSYIDRKQESNWSNKVTRAMAILQREASLEEIVRLVGLDSLSEQDRLTMAVARQIREDYLQQNAFDSVDTFTSFPKQEAMLTNILTFNEEASKALSLGAYFNEIMEGTAQVRDRIARSKFIPEENLEQIKGLTQKVTKEIHHVLAKGGI</sequence>
<reference key="1">
    <citation type="journal article" date="2003" name="Genome Res.">
        <title>Genome sequence of an M3 strain of Streptococcus pyogenes reveals a large-scale genomic rearrangement in invasive strains and new insights into phage evolution.</title>
        <authorList>
            <person name="Nakagawa I."/>
            <person name="Kurokawa K."/>
            <person name="Yamashita A."/>
            <person name="Nakata M."/>
            <person name="Tomiyasu Y."/>
            <person name="Okahashi N."/>
            <person name="Kawabata S."/>
            <person name="Yamazaki K."/>
            <person name="Shiba T."/>
            <person name="Yasunaga T."/>
            <person name="Hayashi H."/>
            <person name="Hattori M."/>
            <person name="Hamada S."/>
        </authorList>
    </citation>
    <scope>NUCLEOTIDE SEQUENCE [LARGE SCALE GENOMIC DNA]</scope>
    <source>
        <strain>SSI-1</strain>
    </source>
</reference>
<evidence type="ECO:0000255" key="1">
    <source>
        <dbReference type="HAMAP-Rule" id="MF_00309"/>
    </source>
</evidence>
<evidence type="ECO:0000305" key="2"/>
<accession>P0DA07</accession>
<accession>Q879P3</accession>
<accession>Q8K8T1</accession>
<proteinExistence type="inferred from homology"/>